<proteinExistence type="inferred from homology"/>
<dbReference type="EC" id="1.1.1.85" evidence="1"/>
<dbReference type="EMBL" id="AL646052">
    <property type="protein sequence ID" value="CAD15690.1"/>
    <property type="status" value="ALT_INIT"/>
    <property type="molecule type" value="Genomic_DNA"/>
</dbReference>
<dbReference type="RefSeq" id="WP_043876750.1">
    <property type="nucleotide sequence ID" value="NC_003295.1"/>
</dbReference>
<dbReference type="SMR" id="Q8XXX5"/>
<dbReference type="STRING" id="267608.RSc1988"/>
<dbReference type="EnsemblBacteria" id="CAD15690">
    <property type="protein sequence ID" value="CAD15690"/>
    <property type="gene ID" value="RSc1988"/>
</dbReference>
<dbReference type="KEGG" id="rso:RSc1988"/>
<dbReference type="PATRIC" id="fig|267608.8.peg.2020"/>
<dbReference type="eggNOG" id="COG0473">
    <property type="taxonomic scope" value="Bacteria"/>
</dbReference>
<dbReference type="HOGENOM" id="CLU_031953_0_3_4"/>
<dbReference type="UniPathway" id="UPA00048">
    <property type="reaction ID" value="UER00072"/>
</dbReference>
<dbReference type="Proteomes" id="UP000001436">
    <property type="component" value="Chromosome"/>
</dbReference>
<dbReference type="GO" id="GO:0005829">
    <property type="term" value="C:cytosol"/>
    <property type="evidence" value="ECO:0007669"/>
    <property type="project" value="TreeGrafter"/>
</dbReference>
<dbReference type="GO" id="GO:0003862">
    <property type="term" value="F:3-isopropylmalate dehydrogenase activity"/>
    <property type="evidence" value="ECO:0007669"/>
    <property type="project" value="UniProtKB-UniRule"/>
</dbReference>
<dbReference type="GO" id="GO:0000287">
    <property type="term" value="F:magnesium ion binding"/>
    <property type="evidence" value="ECO:0007669"/>
    <property type="project" value="InterPro"/>
</dbReference>
<dbReference type="GO" id="GO:0051287">
    <property type="term" value="F:NAD binding"/>
    <property type="evidence" value="ECO:0007669"/>
    <property type="project" value="InterPro"/>
</dbReference>
<dbReference type="GO" id="GO:0009098">
    <property type="term" value="P:L-leucine biosynthetic process"/>
    <property type="evidence" value="ECO:0007669"/>
    <property type="project" value="UniProtKB-UniRule"/>
</dbReference>
<dbReference type="FunFam" id="3.40.718.10:FF:000028">
    <property type="entry name" value="3-isopropylmalate dehydrogenase"/>
    <property type="match status" value="1"/>
</dbReference>
<dbReference type="Gene3D" id="3.40.718.10">
    <property type="entry name" value="Isopropylmalate Dehydrogenase"/>
    <property type="match status" value="1"/>
</dbReference>
<dbReference type="HAMAP" id="MF_01033">
    <property type="entry name" value="LeuB_type1"/>
    <property type="match status" value="1"/>
</dbReference>
<dbReference type="InterPro" id="IPR019818">
    <property type="entry name" value="IsoCit/isopropylmalate_DH_CS"/>
</dbReference>
<dbReference type="InterPro" id="IPR024084">
    <property type="entry name" value="IsoPropMal-DH-like_dom"/>
</dbReference>
<dbReference type="InterPro" id="IPR004429">
    <property type="entry name" value="Isopropylmalate_DH"/>
</dbReference>
<dbReference type="NCBIfam" id="TIGR00169">
    <property type="entry name" value="leuB"/>
    <property type="match status" value="1"/>
</dbReference>
<dbReference type="PANTHER" id="PTHR42979">
    <property type="entry name" value="3-ISOPROPYLMALATE DEHYDROGENASE"/>
    <property type="match status" value="1"/>
</dbReference>
<dbReference type="PANTHER" id="PTHR42979:SF1">
    <property type="entry name" value="3-ISOPROPYLMALATE DEHYDROGENASE"/>
    <property type="match status" value="1"/>
</dbReference>
<dbReference type="Pfam" id="PF00180">
    <property type="entry name" value="Iso_dh"/>
    <property type="match status" value="1"/>
</dbReference>
<dbReference type="SMART" id="SM01329">
    <property type="entry name" value="Iso_dh"/>
    <property type="match status" value="1"/>
</dbReference>
<dbReference type="SUPFAM" id="SSF53659">
    <property type="entry name" value="Isocitrate/Isopropylmalate dehydrogenase-like"/>
    <property type="match status" value="1"/>
</dbReference>
<dbReference type="PROSITE" id="PS00470">
    <property type="entry name" value="IDH_IMDH"/>
    <property type="match status" value="1"/>
</dbReference>
<sequence>MTKIAVLPGDGIGTEIVAEAVKVLKTLGETFEMETAPVGGAGYEAKGHPLPEDTLKLAKEADAILFGAVGDWKYDTLPRELRPEQAILGLRKHLQLFANFRPAICYPELAGASSMKPEIVAGLDILIVRELTGDIYFGQPRGVRAAPDGLFAGAREGFDTMRYSEPEIRRIAHVAFQAAAKRGKKLCSVDKANVLETFQFWKDIVTDVHKEYPEVELSHMYVDNAAMQLVKAPKNFDVVVTGNMFGDILSDEAAMLTGSIGMLPSASLDANNKGLYEPSHGSAPDIAGKGIANPLATILSAAMMLRYTLGKAEQADRIENAVKKVLAQGYRTGDILTPGCKQVGTVEMGDAVVAAL</sequence>
<comment type="function">
    <text evidence="1">Catalyzes the oxidation of 3-carboxy-2-hydroxy-4-methylpentanoate (3-isopropylmalate) to 3-carboxy-4-methyl-2-oxopentanoate. The product decarboxylates to 4-methyl-2 oxopentanoate.</text>
</comment>
<comment type="catalytic activity">
    <reaction evidence="1">
        <text>(2R,3S)-3-isopropylmalate + NAD(+) = 4-methyl-2-oxopentanoate + CO2 + NADH</text>
        <dbReference type="Rhea" id="RHEA:32271"/>
        <dbReference type="ChEBI" id="CHEBI:16526"/>
        <dbReference type="ChEBI" id="CHEBI:17865"/>
        <dbReference type="ChEBI" id="CHEBI:35121"/>
        <dbReference type="ChEBI" id="CHEBI:57540"/>
        <dbReference type="ChEBI" id="CHEBI:57945"/>
        <dbReference type="EC" id="1.1.1.85"/>
    </reaction>
</comment>
<comment type="cofactor">
    <cofactor evidence="1">
        <name>Mg(2+)</name>
        <dbReference type="ChEBI" id="CHEBI:18420"/>
    </cofactor>
    <cofactor evidence="1">
        <name>Mn(2+)</name>
        <dbReference type="ChEBI" id="CHEBI:29035"/>
    </cofactor>
    <text evidence="1">Binds 1 Mg(2+) or Mn(2+) ion per subunit.</text>
</comment>
<comment type="pathway">
    <text evidence="1">Amino-acid biosynthesis; L-leucine biosynthesis; L-leucine from 3-methyl-2-oxobutanoate: step 3/4.</text>
</comment>
<comment type="subunit">
    <text evidence="1">Homodimer.</text>
</comment>
<comment type="subcellular location">
    <subcellularLocation>
        <location evidence="1">Cytoplasm</location>
    </subcellularLocation>
</comment>
<comment type="similarity">
    <text evidence="1">Belongs to the isocitrate and isopropylmalate dehydrogenases family. LeuB type 1 subfamily.</text>
</comment>
<comment type="sequence caution" evidence="2">
    <conflict type="erroneous initiation">
        <sequence resource="EMBL-CDS" id="CAD15690"/>
    </conflict>
</comment>
<evidence type="ECO:0000255" key="1">
    <source>
        <dbReference type="HAMAP-Rule" id="MF_01033"/>
    </source>
</evidence>
<evidence type="ECO:0000305" key="2"/>
<protein>
    <recommendedName>
        <fullName evidence="1">3-isopropylmalate dehydrogenase</fullName>
        <ecNumber evidence="1">1.1.1.85</ecNumber>
    </recommendedName>
    <alternativeName>
        <fullName evidence="1">3-IPM-DH</fullName>
    </alternativeName>
    <alternativeName>
        <fullName evidence="1">Beta-IPM dehydrogenase</fullName>
        <shortName evidence="1">IMDH</shortName>
    </alternativeName>
</protein>
<keyword id="KW-0028">Amino-acid biosynthesis</keyword>
<keyword id="KW-0100">Branched-chain amino acid biosynthesis</keyword>
<keyword id="KW-0963">Cytoplasm</keyword>
<keyword id="KW-0432">Leucine biosynthesis</keyword>
<keyword id="KW-0460">Magnesium</keyword>
<keyword id="KW-0464">Manganese</keyword>
<keyword id="KW-0479">Metal-binding</keyword>
<keyword id="KW-0520">NAD</keyword>
<keyword id="KW-0560">Oxidoreductase</keyword>
<keyword id="KW-1185">Reference proteome</keyword>
<gene>
    <name evidence="1" type="primary">leuB</name>
    <name type="synonym">leuB1</name>
    <name type="ordered locus">RSc1988</name>
    <name type="ORF">RS03417</name>
</gene>
<accession>Q8XXX5</accession>
<name>LEU3_RALN1</name>
<feature type="chain" id="PRO_0000083735" description="3-isopropylmalate dehydrogenase">
    <location>
        <begin position="1"/>
        <end position="356"/>
    </location>
</feature>
<feature type="binding site" evidence="1">
    <location>
        <position position="91"/>
    </location>
    <ligand>
        <name>substrate</name>
    </ligand>
</feature>
<feature type="binding site" evidence="1">
    <location>
        <position position="101"/>
    </location>
    <ligand>
        <name>substrate</name>
    </ligand>
</feature>
<feature type="binding site" evidence="1">
    <location>
        <position position="129"/>
    </location>
    <ligand>
        <name>substrate</name>
    </ligand>
</feature>
<feature type="binding site" evidence="1">
    <location>
        <position position="223"/>
    </location>
    <ligand>
        <name>Mg(2+)</name>
        <dbReference type="ChEBI" id="CHEBI:18420"/>
    </ligand>
</feature>
<feature type="binding site" evidence="1">
    <location>
        <position position="223"/>
    </location>
    <ligand>
        <name>substrate</name>
    </ligand>
</feature>
<feature type="binding site" evidence="1">
    <location>
        <position position="247"/>
    </location>
    <ligand>
        <name>Mg(2+)</name>
        <dbReference type="ChEBI" id="CHEBI:18420"/>
    </ligand>
</feature>
<feature type="binding site" evidence="1">
    <location>
        <position position="251"/>
    </location>
    <ligand>
        <name>Mg(2+)</name>
        <dbReference type="ChEBI" id="CHEBI:18420"/>
    </ligand>
</feature>
<feature type="binding site" evidence="1">
    <location>
        <begin position="281"/>
        <end position="293"/>
    </location>
    <ligand>
        <name>NAD(+)</name>
        <dbReference type="ChEBI" id="CHEBI:57540"/>
    </ligand>
</feature>
<feature type="site" description="Important for catalysis" evidence="1">
    <location>
        <position position="136"/>
    </location>
</feature>
<feature type="site" description="Important for catalysis" evidence="1">
    <location>
        <position position="191"/>
    </location>
</feature>
<reference key="1">
    <citation type="journal article" date="2002" name="Nature">
        <title>Genome sequence of the plant pathogen Ralstonia solanacearum.</title>
        <authorList>
            <person name="Salanoubat M."/>
            <person name="Genin S."/>
            <person name="Artiguenave F."/>
            <person name="Gouzy J."/>
            <person name="Mangenot S."/>
            <person name="Arlat M."/>
            <person name="Billault A."/>
            <person name="Brottier P."/>
            <person name="Camus J.-C."/>
            <person name="Cattolico L."/>
            <person name="Chandler M."/>
            <person name="Choisne N."/>
            <person name="Claudel-Renard C."/>
            <person name="Cunnac S."/>
            <person name="Demange N."/>
            <person name="Gaspin C."/>
            <person name="Lavie M."/>
            <person name="Moisan A."/>
            <person name="Robert C."/>
            <person name="Saurin W."/>
            <person name="Schiex T."/>
            <person name="Siguier P."/>
            <person name="Thebault P."/>
            <person name="Whalen M."/>
            <person name="Wincker P."/>
            <person name="Levy M."/>
            <person name="Weissenbach J."/>
            <person name="Boucher C.A."/>
        </authorList>
    </citation>
    <scope>NUCLEOTIDE SEQUENCE [LARGE SCALE GENOMIC DNA]</scope>
    <source>
        <strain>ATCC BAA-1114 / GMI1000</strain>
    </source>
</reference>
<organism>
    <name type="scientific">Ralstonia nicotianae (strain ATCC BAA-1114 / GMI1000)</name>
    <name type="common">Ralstonia solanacearum</name>
    <dbReference type="NCBI Taxonomy" id="267608"/>
    <lineage>
        <taxon>Bacteria</taxon>
        <taxon>Pseudomonadati</taxon>
        <taxon>Pseudomonadota</taxon>
        <taxon>Betaproteobacteria</taxon>
        <taxon>Burkholderiales</taxon>
        <taxon>Burkholderiaceae</taxon>
        <taxon>Ralstonia</taxon>
        <taxon>Ralstonia solanacearum species complex</taxon>
    </lineage>
</organism>